<evidence type="ECO:0000255" key="1">
    <source>
        <dbReference type="HAMAP-Rule" id="MF_00046"/>
    </source>
</evidence>
<gene>
    <name evidence="1" type="primary">murC</name>
    <name type="ordered locus">GbCGDNIH1_0428</name>
</gene>
<dbReference type="EC" id="6.3.2.8" evidence="1"/>
<dbReference type="EMBL" id="CP000394">
    <property type="protein sequence ID" value="ABI61326.1"/>
    <property type="molecule type" value="Genomic_DNA"/>
</dbReference>
<dbReference type="RefSeq" id="WP_011631136.1">
    <property type="nucleotide sequence ID" value="NC_008343.2"/>
</dbReference>
<dbReference type="SMR" id="Q0BV26"/>
<dbReference type="STRING" id="391165.GbCGDNIH1_0428"/>
<dbReference type="KEGG" id="gbe:GbCGDNIH1_0428"/>
<dbReference type="eggNOG" id="COG0773">
    <property type="taxonomic scope" value="Bacteria"/>
</dbReference>
<dbReference type="HOGENOM" id="CLU_028104_2_2_5"/>
<dbReference type="OrthoDB" id="9804126at2"/>
<dbReference type="UniPathway" id="UPA00219"/>
<dbReference type="Proteomes" id="UP000001963">
    <property type="component" value="Chromosome"/>
</dbReference>
<dbReference type="GO" id="GO:0005737">
    <property type="term" value="C:cytoplasm"/>
    <property type="evidence" value="ECO:0007669"/>
    <property type="project" value="UniProtKB-SubCell"/>
</dbReference>
<dbReference type="GO" id="GO:0005524">
    <property type="term" value="F:ATP binding"/>
    <property type="evidence" value="ECO:0007669"/>
    <property type="project" value="UniProtKB-UniRule"/>
</dbReference>
<dbReference type="GO" id="GO:0008763">
    <property type="term" value="F:UDP-N-acetylmuramate-L-alanine ligase activity"/>
    <property type="evidence" value="ECO:0007669"/>
    <property type="project" value="UniProtKB-UniRule"/>
</dbReference>
<dbReference type="GO" id="GO:0051301">
    <property type="term" value="P:cell division"/>
    <property type="evidence" value="ECO:0007669"/>
    <property type="project" value="UniProtKB-KW"/>
</dbReference>
<dbReference type="GO" id="GO:0071555">
    <property type="term" value="P:cell wall organization"/>
    <property type="evidence" value="ECO:0007669"/>
    <property type="project" value="UniProtKB-KW"/>
</dbReference>
<dbReference type="GO" id="GO:0009252">
    <property type="term" value="P:peptidoglycan biosynthetic process"/>
    <property type="evidence" value="ECO:0007669"/>
    <property type="project" value="UniProtKB-UniRule"/>
</dbReference>
<dbReference type="GO" id="GO:0008360">
    <property type="term" value="P:regulation of cell shape"/>
    <property type="evidence" value="ECO:0007669"/>
    <property type="project" value="UniProtKB-KW"/>
</dbReference>
<dbReference type="Gene3D" id="3.90.190.20">
    <property type="entry name" value="Mur ligase, C-terminal domain"/>
    <property type="match status" value="1"/>
</dbReference>
<dbReference type="Gene3D" id="3.40.1190.10">
    <property type="entry name" value="Mur-like, catalytic domain"/>
    <property type="match status" value="1"/>
</dbReference>
<dbReference type="Gene3D" id="3.40.50.720">
    <property type="entry name" value="NAD(P)-binding Rossmann-like Domain"/>
    <property type="match status" value="1"/>
</dbReference>
<dbReference type="HAMAP" id="MF_00046">
    <property type="entry name" value="MurC"/>
    <property type="match status" value="1"/>
</dbReference>
<dbReference type="InterPro" id="IPR036565">
    <property type="entry name" value="Mur-like_cat_sf"/>
</dbReference>
<dbReference type="InterPro" id="IPR004101">
    <property type="entry name" value="Mur_ligase_C"/>
</dbReference>
<dbReference type="InterPro" id="IPR036615">
    <property type="entry name" value="Mur_ligase_C_dom_sf"/>
</dbReference>
<dbReference type="InterPro" id="IPR013221">
    <property type="entry name" value="Mur_ligase_cen"/>
</dbReference>
<dbReference type="InterPro" id="IPR000713">
    <property type="entry name" value="Mur_ligase_N"/>
</dbReference>
<dbReference type="InterPro" id="IPR050061">
    <property type="entry name" value="MurCDEF_pg_biosynth"/>
</dbReference>
<dbReference type="InterPro" id="IPR005758">
    <property type="entry name" value="UDP-N-AcMur_Ala_ligase_MurC"/>
</dbReference>
<dbReference type="NCBIfam" id="TIGR01082">
    <property type="entry name" value="murC"/>
    <property type="match status" value="1"/>
</dbReference>
<dbReference type="PANTHER" id="PTHR43445:SF3">
    <property type="entry name" value="UDP-N-ACETYLMURAMATE--L-ALANINE LIGASE"/>
    <property type="match status" value="1"/>
</dbReference>
<dbReference type="PANTHER" id="PTHR43445">
    <property type="entry name" value="UDP-N-ACETYLMURAMATE--L-ALANINE LIGASE-RELATED"/>
    <property type="match status" value="1"/>
</dbReference>
<dbReference type="Pfam" id="PF01225">
    <property type="entry name" value="Mur_ligase"/>
    <property type="match status" value="1"/>
</dbReference>
<dbReference type="Pfam" id="PF02875">
    <property type="entry name" value="Mur_ligase_C"/>
    <property type="match status" value="1"/>
</dbReference>
<dbReference type="Pfam" id="PF08245">
    <property type="entry name" value="Mur_ligase_M"/>
    <property type="match status" value="1"/>
</dbReference>
<dbReference type="SUPFAM" id="SSF51984">
    <property type="entry name" value="MurCD N-terminal domain"/>
    <property type="match status" value="1"/>
</dbReference>
<dbReference type="SUPFAM" id="SSF53623">
    <property type="entry name" value="MurD-like peptide ligases, catalytic domain"/>
    <property type="match status" value="1"/>
</dbReference>
<dbReference type="SUPFAM" id="SSF53244">
    <property type="entry name" value="MurD-like peptide ligases, peptide-binding domain"/>
    <property type="match status" value="1"/>
</dbReference>
<reference key="1">
    <citation type="journal article" date="2007" name="J. Bacteriol.">
        <title>Genome sequence analysis of the emerging human pathogenic acetic acid bacterium Granulibacter bethesdensis.</title>
        <authorList>
            <person name="Greenberg D.E."/>
            <person name="Porcella S.F."/>
            <person name="Zelazny A.M."/>
            <person name="Virtaneva K."/>
            <person name="Sturdevant D.E."/>
            <person name="Kupko J.J. III"/>
            <person name="Barbian K.D."/>
            <person name="Babar A."/>
            <person name="Dorward D.W."/>
            <person name="Holland S.M."/>
        </authorList>
    </citation>
    <scope>NUCLEOTIDE SEQUENCE [LARGE SCALE GENOMIC DNA]</scope>
    <source>
        <strain>ATCC BAA-1260 / CGDNIH1</strain>
    </source>
</reference>
<name>MURC_GRABC</name>
<feature type="chain" id="PRO_1000004348" description="UDP-N-acetylmuramate--L-alanine ligase">
    <location>
        <begin position="1"/>
        <end position="481"/>
    </location>
</feature>
<feature type="binding site" evidence="1">
    <location>
        <begin position="115"/>
        <end position="121"/>
    </location>
    <ligand>
        <name>ATP</name>
        <dbReference type="ChEBI" id="CHEBI:30616"/>
    </ligand>
</feature>
<comment type="function">
    <text evidence="1">Cell wall formation.</text>
</comment>
<comment type="catalytic activity">
    <reaction evidence="1">
        <text>UDP-N-acetyl-alpha-D-muramate + L-alanine + ATP = UDP-N-acetyl-alpha-D-muramoyl-L-alanine + ADP + phosphate + H(+)</text>
        <dbReference type="Rhea" id="RHEA:23372"/>
        <dbReference type="ChEBI" id="CHEBI:15378"/>
        <dbReference type="ChEBI" id="CHEBI:30616"/>
        <dbReference type="ChEBI" id="CHEBI:43474"/>
        <dbReference type="ChEBI" id="CHEBI:57972"/>
        <dbReference type="ChEBI" id="CHEBI:70757"/>
        <dbReference type="ChEBI" id="CHEBI:83898"/>
        <dbReference type="ChEBI" id="CHEBI:456216"/>
        <dbReference type="EC" id="6.3.2.8"/>
    </reaction>
</comment>
<comment type="pathway">
    <text evidence="1">Cell wall biogenesis; peptidoglycan biosynthesis.</text>
</comment>
<comment type="subcellular location">
    <subcellularLocation>
        <location evidence="1">Cytoplasm</location>
    </subcellularLocation>
</comment>
<comment type="similarity">
    <text evidence="1">Belongs to the MurCDEF family.</text>
</comment>
<organism>
    <name type="scientific">Granulibacter bethesdensis (strain ATCC BAA-1260 / CGDNIH1)</name>
    <dbReference type="NCBI Taxonomy" id="391165"/>
    <lineage>
        <taxon>Bacteria</taxon>
        <taxon>Pseudomonadati</taxon>
        <taxon>Pseudomonadota</taxon>
        <taxon>Alphaproteobacteria</taxon>
        <taxon>Acetobacterales</taxon>
        <taxon>Acetobacteraceae</taxon>
        <taxon>Granulibacter</taxon>
    </lineage>
</organism>
<keyword id="KW-0067">ATP-binding</keyword>
<keyword id="KW-0131">Cell cycle</keyword>
<keyword id="KW-0132">Cell division</keyword>
<keyword id="KW-0133">Cell shape</keyword>
<keyword id="KW-0961">Cell wall biogenesis/degradation</keyword>
<keyword id="KW-0963">Cytoplasm</keyword>
<keyword id="KW-0436">Ligase</keyword>
<keyword id="KW-0547">Nucleotide-binding</keyword>
<keyword id="KW-0573">Peptidoglycan synthesis</keyword>
<keyword id="KW-1185">Reference proteome</keyword>
<sequence length="481" mass="51400">MRALPLTIGTIHFVGIGGIGMSGIAEVLHNLGYAVQGSDISDNQNVRRLREAGIQVMIGHDAANLGTAQVVVISSAVGRDNPEVAAARAKLIPVVRRAEMLAELMRLKWAVAVGGTHGKTTTTSLIAAVLEAAQLDPTVINGGIINAYGTNTRLGAGEWMVVEADESDGSFLRLPAVIAVVTNMDPEHLDHWGTAEAMEAGYQQFVSNIPFYGFAVLCIDHPTVQKMIPQLSDHRIITYGFSPQADVRAERINTDKFGATFEVVITDRQTRRTRRTPPLRLPMLGEHNIANTLAAIAVAVEMGISDSVLQSAFASFKGVKRRFTKTGETGGITIIDDYGHHPVEIAAVLRAARQAGARDVIAVVQPHRYSRLASLFNEFCTCMNDAGTVIVADVYNAGESPIEGVDRDSLVDGLRTSGHKSVVPLPGPEHLAEMIHAIARPGDFVVCLGAGNITAWAQTLPEELATLQAKSSKIRRTGSGG</sequence>
<accession>Q0BV26</accession>
<proteinExistence type="inferred from homology"/>
<protein>
    <recommendedName>
        <fullName evidence="1">UDP-N-acetylmuramate--L-alanine ligase</fullName>
        <ecNumber evidence="1">6.3.2.8</ecNumber>
    </recommendedName>
    <alternativeName>
        <fullName evidence="1">UDP-N-acetylmuramoyl-L-alanine synthetase</fullName>
    </alternativeName>
</protein>